<feature type="chain" id="PRO_0000069153" description="Type-1 angiotensin II receptor">
    <location>
        <begin position="1"/>
        <end position="359"/>
    </location>
</feature>
<feature type="topological domain" description="Extracellular" evidence="12 13 15 16 27 28 29 30 31 32">
    <location>
        <begin position="1"/>
        <end position="25"/>
    </location>
</feature>
<feature type="transmembrane region" description="Helical; Name=1" evidence="12 13 15 16 27 28 29 30 31 32">
    <location>
        <begin position="26"/>
        <end position="55"/>
    </location>
</feature>
<feature type="topological domain" description="Cytoplasmic" evidence="12 13 15 16 27 28 29 30 31 32">
    <location>
        <begin position="56"/>
        <end position="61"/>
    </location>
</feature>
<feature type="transmembrane region" description="Helical; Name=2" evidence="12 13 15 16 27 28 29 30 31 32">
    <location>
        <begin position="62"/>
        <end position="89"/>
    </location>
</feature>
<feature type="topological domain" description="Extracellular" evidence="12 13 15 16 27 28 29 30 31 32">
    <location>
        <begin position="90"/>
        <end position="98"/>
    </location>
</feature>
<feature type="transmembrane region" description="Helical; Name=3" evidence="12 13 15 16 27 28 29 30 31 32">
    <location>
        <begin position="99"/>
        <end position="125"/>
    </location>
</feature>
<feature type="topological domain" description="Cytoplasmic" evidence="12 13 15 16 27 28 29 30 31 32">
    <location>
        <begin position="126"/>
        <end position="141"/>
    </location>
</feature>
<feature type="transmembrane region" description="Helical; Name=4" evidence="12 13 15 16 27 28 29 30 31 32">
    <location>
        <begin position="142"/>
        <end position="165"/>
    </location>
</feature>
<feature type="topological domain" description="Extracellular" evidence="12 13 15 16 27 28 29 30 31 32">
    <location>
        <begin position="166"/>
        <end position="190"/>
    </location>
</feature>
<feature type="transmembrane region" description="Helical; Name=5" evidence="12 13 15 16 27 28 29 30 31 32">
    <location>
        <begin position="191"/>
        <end position="216"/>
    </location>
</feature>
<feature type="topological domain" description="Cytoplasmic" evidence="12 13 27 28">
    <location>
        <begin position="217"/>
        <end position="239"/>
    </location>
</feature>
<feature type="transmembrane region" description="Helical; Name=6" evidence="12 13 27 28">
    <location>
        <begin position="240"/>
        <end position="268"/>
    </location>
</feature>
<feature type="topological domain" description="Extracellular" evidence="12 13 27 28">
    <location>
        <begin position="269"/>
        <end position="278"/>
    </location>
</feature>
<feature type="transmembrane region" description="Helical; Name=7" evidence="12 13 27 28">
    <location>
        <begin position="279"/>
        <end position="304"/>
    </location>
</feature>
<feature type="topological domain" description="Cytoplasmic" evidence="12 13 27 28">
    <location>
        <begin position="305"/>
        <end position="359"/>
    </location>
</feature>
<feature type="region of interest" description="Disordered" evidence="4">
    <location>
        <begin position="335"/>
        <end position="359"/>
    </location>
</feature>
<feature type="compositionally biased region" description="Polar residues" evidence="4">
    <location>
        <begin position="335"/>
        <end position="350"/>
    </location>
</feature>
<feature type="binding site" evidence="24 29">
    <location>
        <position position="15"/>
    </location>
    <ligand>
        <name>angiotensin II</name>
        <dbReference type="ChEBI" id="CHEBI:58506"/>
    </ligand>
</feature>
<feature type="binding site" evidence="24 25 29 30">
    <location>
        <position position="17"/>
    </location>
    <ligand>
        <name>angiotensin II</name>
        <dbReference type="ChEBI" id="CHEBI:58506"/>
    </ligand>
</feature>
<feature type="binding site" evidence="24 25 29 30">
    <location>
        <position position="167"/>
    </location>
    <ligand>
        <name>angiotensin II</name>
        <dbReference type="ChEBI" id="CHEBI:58506"/>
    </ligand>
</feature>
<feature type="binding site" evidence="24 25 29 30">
    <location>
        <position position="182"/>
    </location>
    <ligand>
        <name>angiotensin II</name>
        <dbReference type="ChEBI" id="CHEBI:58506"/>
    </ligand>
</feature>
<feature type="binding site" evidence="24 25 29 30">
    <location>
        <position position="183"/>
    </location>
    <ligand>
        <name>angiotensin II</name>
        <dbReference type="ChEBI" id="CHEBI:58506"/>
    </ligand>
</feature>
<feature type="binding site" evidence="24 25 29 30">
    <location>
        <position position="184"/>
    </location>
    <ligand>
        <name>angiotensin II</name>
        <dbReference type="ChEBI" id="CHEBI:58506"/>
    </ligand>
</feature>
<feature type="binding site" evidence="24 25 29 30">
    <location>
        <position position="199"/>
    </location>
    <ligand>
        <name>angiotensin II</name>
        <dbReference type="ChEBI" id="CHEBI:58506"/>
    </ligand>
</feature>
<feature type="lipid moiety-binding region" description="S-palmitoyl cysteine" evidence="2">
    <location>
        <position position="355"/>
    </location>
</feature>
<feature type="glycosylation site" description="N-linked (GlcNAc...) (complex) asparagine" evidence="11">
    <location>
        <position position="4"/>
    </location>
</feature>
<feature type="glycosylation site" description="N-linked (GlcNAc...) asparagine" evidence="15 16 29 30">
    <location>
        <position position="176"/>
    </location>
</feature>
<feature type="glycosylation site" description="N-linked (GlcNAc...) asparagine" evidence="2">
    <location>
        <position position="188"/>
    </location>
</feature>
<feature type="disulfide bond" evidence="12 13 15 16 27 28 29 30 31 32">
    <location>
        <begin position="18"/>
        <end position="274"/>
    </location>
</feature>
<feature type="disulfide bond" evidence="3 12 13 15 16 27 28 29 30 31 32">
    <location>
        <begin position="101"/>
        <end position="180"/>
    </location>
</feature>
<feature type="sequence variant" id="VAR_029206" description="In dbSNP:rs12721226.">
    <original>A</original>
    <variation>T</variation>
    <location>
        <position position="163"/>
    </location>
</feature>
<feature type="sequence variant" id="VAR_070375" description="In dbSNP:rs17852013." evidence="6">
    <original>L</original>
    <variation>V</variation>
    <location>
        <position position="222"/>
    </location>
</feature>
<feature type="sequence variant" id="VAR_029207" description="In dbSNP:rs12721225.">
    <original>A</original>
    <variation>S</variation>
    <location>
        <position position="244"/>
    </location>
</feature>
<feature type="sequence variant" id="VAR_035086" description="In RTD; dbSNP:rs104893677." evidence="10">
    <original>T</original>
    <variation>M</variation>
    <location>
        <position position="282"/>
    </location>
</feature>
<feature type="sequence variant" id="VAR_011847" description="In dbSNP:rs1064533." evidence="18">
    <original>C</original>
    <variation>W</variation>
    <location>
        <position position="289"/>
    </location>
</feature>
<feature type="sequence variant" id="VAR_011848" description="In dbSNP:rs1801021.">
    <original>T</original>
    <variation>P</variation>
    <location>
        <position position="336"/>
    </location>
</feature>
<feature type="sequence variant" id="VAR_070376" description="In dbSNP:rs17852012." evidence="6">
    <original>P</original>
    <variation>H</variation>
    <location>
        <position position="341"/>
    </location>
</feature>
<feature type="mutagenesis site" description="Abolished binding to angiotensin II; abolished binding to olmesartan inhibitor." evidence="13">
    <original>Y</original>
    <variation>A</variation>
    <variation>F</variation>
    <location>
        <position position="35"/>
    </location>
</feature>
<feature type="mutagenesis site" description="Abolished binding to angiotensin II; abolished binding to olmesartan inhibitor." evidence="12 13">
    <original>W</original>
    <variation>A</variation>
    <variation>I</variation>
    <location>
        <position position="84"/>
    </location>
</feature>
<feature type="mutagenesis site" description="Decreased binding to telmisartan inhibitor." evidence="12">
    <original>Y</original>
    <variation>A</variation>
    <location>
        <position position="92"/>
    </location>
</feature>
<feature type="mutagenesis site" description="Reduced affinity for angiotensin II." evidence="19">
    <original>N</original>
    <variation>A</variation>
    <variation>F</variation>
    <variation>I</variation>
    <location>
        <position position="111"/>
    </location>
</feature>
<feature type="mutagenesis site" description="Induces a conformational change in the angiotensin II-binding pocket, leading to constitutive activation of the receptor." evidence="19">
    <original>N</original>
    <variation>G</variation>
    <location>
        <position position="111"/>
    </location>
</feature>
<feature type="mutagenesis site" description="Increased affinity for angiotensin II." evidence="16">
    <original>L</original>
    <variation>A</variation>
    <location>
        <position position="112"/>
    </location>
</feature>
<feature type="mutagenesis site" description="Abolished binding to angiotensin II." evidence="12">
    <original>K</original>
    <variation>A</variation>
    <location>
        <position position="135"/>
    </location>
</feature>
<feature type="mutagenesis site" description="Abolished binding to angiotensin II; abolished binding to olmesartan inhibitor." evidence="12 13">
    <original>R</original>
    <variation>A</variation>
    <location>
        <position position="167"/>
    </location>
</feature>
<feature type="mutagenesis site" description="Reduced binding to angiotensin II without affecting binding to candesartan inhibitor." evidence="13">
    <original>F</original>
    <variation>A</variation>
    <location>
        <position position="182"/>
    </location>
</feature>
<feature type="mutagenesis site" description="Abolished binding to angiotensin II." evidence="13">
    <original>K</original>
    <variation>R</variation>
    <variation>Q</variation>
    <location>
        <position position="199"/>
    </location>
</feature>
<feature type="mutagenesis site" description="Slightly affects binding to eprosartan inhibitor." evidence="12">
    <original>M</original>
    <variation>A</variation>
    <location>
        <position position="284"/>
    </location>
</feature>
<feature type="mutagenesis site" description="Decreased binding to eprosartan inhibitor." evidence="12">
    <original>P</original>
    <variation>A</variation>
    <location>
        <position position="285"/>
    </location>
</feature>
<feature type="mutagenesis site" description="Decreased binding to eprosartan inhibitor." evidence="12 13">
    <original>I</original>
    <variation>A</variation>
    <location>
        <position position="288"/>
    </location>
</feature>
<feature type="mutagenesis site" description="Mimics the disordered side chain induced by angiotensin II-binding; increased affinity for G-protein subunit alpha proteins. Decreased affinity for telmisartan." evidence="13 16">
    <original>Y</original>
    <variation>A</variation>
    <location>
        <position position="292"/>
    </location>
</feature>
<feature type="sequence conflict" description="In Ref. 6; BAA02968." evidence="23" ref="6">
    <original>Q</original>
    <variation>R</variation>
    <location>
        <position position="187"/>
    </location>
</feature>
<feature type="sequence conflict" description="In Ref. 6; BAA02968." evidence="23" ref="6">
    <original>FL</original>
    <variation>SC</variation>
    <location>
        <begin position="204"/>
        <end position="205"/>
    </location>
</feature>
<feature type="sequence conflict" description="In Ref. 6; BAA02968." evidence="23" ref="6">
    <original>K</original>
    <variation>N</variation>
    <location>
        <position position="232"/>
    </location>
</feature>
<feature type="sequence conflict" description="In Ref. 6; BAA02968." evidence="23" ref="6">
    <original>K</original>
    <variation>R</variation>
    <location>
        <position position="240"/>
    </location>
</feature>
<feature type="sequence conflict" description="In Ref. 6; BAA02968." evidence="23" ref="6">
    <original>L</original>
    <variation>Q</variation>
    <location>
        <position position="268"/>
    </location>
</feature>
<feature type="sequence conflict" description="In Ref. 6; BAA02968." evidence="23" ref="6">
    <original>RYF</original>
    <variation>KDI</variation>
    <location>
        <begin position="311"/>
        <end position="313"/>
    </location>
</feature>
<feature type="strand" evidence="35">
    <location>
        <begin position="12"/>
        <end position="14"/>
    </location>
</feature>
<feature type="turn" evidence="35">
    <location>
        <begin position="19"/>
        <end position="22"/>
    </location>
</feature>
<feature type="helix" evidence="35">
    <location>
        <begin position="25"/>
        <end position="56"/>
    </location>
</feature>
<feature type="helix" evidence="35">
    <location>
        <begin position="62"/>
        <end position="79"/>
    </location>
</feature>
<feature type="helix" evidence="35">
    <location>
        <begin position="81"/>
        <end position="89"/>
    </location>
</feature>
<feature type="helix" evidence="35">
    <location>
        <begin position="97"/>
        <end position="131"/>
    </location>
</feature>
<feature type="turn" evidence="35">
    <location>
        <begin position="133"/>
        <end position="135"/>
    </location>
</feature>
<feature type="turn" evidence="35">
    <location>
        <begin position="137"/>
        <end position="139"/>
    </location>
</feature>
<feature type="helix" evidence="35">
    <location>
        <begin position="142"/>
        <end position="159"/>
    </location>
</feature>
<feature type="helix" evidence="35">
    <location>
        <begin position="162"/>
        <end position="165"/>
    </location>
</feature>
<feature type="strand" evidence="35">
    <location>
        <begin position="168"/>
        <end position="172"/>
    </location>
</feature>
<feature type="turn" evidence="35">
    <location>
        <begin position="173"/>
        <end position="176"/>
    </location>
</feature>
<feature type="strand" evidence="35">
    <location>
        <begin position="177"/>
        <end position="184"/>
    </location>
</feature>
<feature type="strand" evidence="35">
    <location>
        <begin position="186"/>
        <end position="188"/>
    </location>
</feature>
<feature type="helix" evidence="34">
    <location>
        <begin position="191"/>
        <end position="194"/>
    </location>
</feature>
<feature type="helix" evidence="35">
    <location>
        <begin position="195"/>
        <end position="201"/>
    </location>
</feature>
<feature type="turn" evidence="35">
    <location>
        <begin position="202"/>
        <end position="204"/>
    </location>
</feature>
<feature type="helix" evidence="35">
    <location>
        <begin position="205"/>
        <end position="226"/>
    </location>
</feature>
<feature type="helix" evidence="35">
    <location>
        <begin position="238"/>
        <end position="267"/>
    </location>
</feature>
<feature type="strand" evidence="33">
    <location>
        <begin position="269"/>
        <end position="271"/>
    </location>
</feature>
<feature type="helix" evidence="35">
    <location>
        <begin position="274"/>
        <end position="295"/>
    </location>
</feature>
<feature type="helix" evidence="35">
    <location>
        <begin position="298"/>
        <end position="305"/>
    </location>
</feature>
<feature type="helix" evidence="35">
    <location>
        <begin position="307"/>
        <end position="317"/>
    </location>
</feature>
<accession>P30556</accession>
<accession>Q13725</accession>
<accession>Q8TBK4</accession>
<dbReference type="EMBL" id="M91464">
    <property type="protein sequence ID" value="AAA35569.1"/>
    <property type="molecule type" value="Genomic_DNA"/>
</dbReference>
<dbReference type="EMBL" id="Z11162">
    <property type="protein sequence ID" value="CAA77513.1"/>
    <property type="molecule type" value="Genomic_DNA"/>
</dbReference>
<dbReference type="EMBL" id="M87290">
    <property type="protein sequence ID" value="AAA35535.1"/>
    <property type="molecule type" value="mRNA"/>
</dbReference>
<dbReference type="EMBL" id="S77410">
    <property type="protein sequence ID" value="AAB34644.1"/>
    <property type="molecule type" value="mRNA"/>
</dbReference>
<dbReference type="EMBL" id="M93394">
    <property type="protein sequence ID" value="AAA58370.1"/>
    <property type="molecule type" value="mRNA"/>
</dbReference>
<dbReference type="EMBL" id="D13814">
    <property type="protein sequence ID" value="BAA02968.1"/>
    <property type="molecule type" value="mRNA"/>
</dbReference>
<dbReference type="EMBL" id="X65699">
    <property type="protein sequence ID" value="CAA46621.1"/>
    <property type="molecule type" value="mRNA"/>
</dbReference>
<dbReference type="EMBL" id="AF245699">
    <property type="protein sequence ID" value="AAF70464.1"/>
    <property type="molecule type" value="Genomic_DNA"/>
</dbReference>
<dbReference type="EMBL" id="AY221090">
    <property type="protein sequence ID" value="AAO65968.1"/>
    <property type="molecule type" value="Genomic_DNA"/>
</dbReference>
<dbReference type="EMBL" id="BC022447">
    <property type="protein sequence ID" value="AAH22447.1"/>
    <property type="molecule type" value="mRNA"/>
</dbReference>
<dbReference type="CCDS" id="CCDS3137.1"/>
<dbReference type="PIR" id="I39418">
    <property type="entry name" value="I39418"/>
</dbReference>
<dbReference type="PIR" id="JC1104">
    <property type="entry name" value="JC1104"/>
</dbReference>
<dbReference type="RefSeq" id="NP_000676.1">
    <property type="nucleotide sequence ID" value="NM_000685.5"/>
</dbReference>
<dbReference type="RefSeq" id="NP_001369665.1">
    <property type="nucleotide sequence ID" value="NM_001382736.1"/>
</dbReference>
<dbReference type="RefSeq" id="NP_001369666.1">
    <property type="nucleotide sequence ID" value="NM_001382737.1"/>
</dbReference>
<dbReference type="RefSeq" id="NP_004826.5">
    <property type="nucleotide sequence ID" value="NM_004835.4"/>
</dbReference>
<dbReference type="RefSeq" id="NP_033611.1">
    <property type="nucleotide sequence ID" value="NM_009585.4"/>
</dbReference>
<dbReference type="RefSeq" id="NP_114038.5">
    <property type="nucleotide sequence ID" value="NM_031850.4"/>
</dbReference>
<dbReference type="RefSeq" id="NP_114438.3">
    <property type="nucleotide sequence ID" value="NM_032049.4"/>
</dbReference>
<dbReference type="PDB" id="4YAY">
    <property type="method" value="X-ray"/>
    <property type="resolution" value="2.90 A"/>
    <property type="chains" value="A=2-319"/>
</dbReference>
<dbReference type="PDB" id="4ZUD">
    <property type="method" value="X-ray"/>
    <property type="resolution" value="2.80 A"/>
    <property type="chains" value="A=2-315"/>
</dbReference>
<dbReference type="PDB" id="6DO1">
    <property type="method" value="X-ray"/>
    <property type="resolution" value="2.90 A"/>
    <property type="chains" value="A/B=2-319"/>
</dbReference>
<dbReference type="PDB" id="6OS0">
    <property type="method" value="X-ray"/>
    <property type="resolution" value="2.90 A"/>
    <property type="chains" value="A=2-319"/>
</dbReference>
<dbReference type="PDB" id="6OS1">
    <property type="method" value="X-ray"/>
    <property type="resolution" value="2.79 A"/>
    <property type="chains" value="A=2-319"/>
</dbReference>
<dbReference type="PDB" id="6OS2">
    <property type="method" value="X-ray"/>
    <property type="resolution" value="2.70 A"/>
    <property type="chains" value="A=2-319"/>
</dbReference>
<dbReference type="PDBsum" id="4YAY"/>
<dbReference type="PDBsum" id="4ZUD"/>
<dbReference type="PDBsum" id="6DO1"/>
<dbReference type="PDBsum" id="6OS0"/>
<dbReference type="PDBsum" id="6OS1"/>
<dbReference type="PDBsum" id="6OS2"/>
<dbReference type="EMDB" id="EMD-41248"/>
<dbReference type="EMDB" id="EMD-41249"/>
<dbReference type="EMDB" id="EMD-47831"/>
<dbReference type="EMDB" id="EMD-47832"/>
<dbReference type="EMDB" id="EMD-47833"/>
<dbReference type="SMR" id="P30556"/>
<dbReference type="BioGRID" id="106691">
    <property type="interactions" value="95"/>
</dbReference>
<dbReference type="CORUM" id="P30556"/>
<dbReference type="FunCoup" id="P30556">
    <property type="interactions" value="1692"/>
</dbReference>
<dbReference type="IntAct" id="P30556">
    <property type="interactions" value="75"/>
</dbReference>
<dbReference type="MINT" id="P30556"/>
<dbReference type="STRING" id="9606.ENSP00000398832"/>
<dbReference type="BindingDB" id="P30556"/>
<dbReference type="ChEMBL" id="CHEMBL227"/>
<dbReference type="DrugBank" id="DB11842">
    <property type="generic name" value="Angiotensin II"/>
</dbReference>
<dbReference type="DrugBank" id="DB08822">
    <property type="generic name" value="Azilsartan medoxomil"/>
</dbReference>
<dbReference type="DrugBank" id="DB13919">
    <property type="generic name" value="Candesartan"/>
</dbReference>
<dbReference type="DrugBank" id="DB00796">
    <property type="generic name" value="Candesartan cilexetil"/>
</dbReference>
<dbReference type="DrugBank" id="DB05739">
    <property type="generic name" value="CYT006-AngQb"/>
</dbReference>
<dbReference type="DrugBank" id="DB00876">
    <property type="generic name" value="Eprosartan"/>
</dbReference>
<dbReference type="DrugBank" id="DB09279">
    <property type="generic name" value="Fimasartan"/>
</dbReference>
<dbReference type="DrugBank" id="DB01342">
    <property type="generic name" value="Forasartan"/>
</dbReference>
<dbReference type="DrugBank" id="DB01029">
    <property type="generic name" value="Irbesartan"/>
</dbReference>
<dbReference type="DrugBank" id="DB00678">
    <property type="generic name" value="Losartan"/>
</dbReference>
<dbReference type="DrugBank" id="DB00275">
    <property type="generic name" value="Olmesartan"/>
</dbReference>
<dbReference type="DrugBank" id="DB01347">
    <property type="generic name" value="Saprisartan"/>
</dbReference>
<dbReference type="DrugBank" id="DB06763">
    <property type="generic name" value="Saralasin"/>
</dbReference>
<dbReference type="DrugBank" id="DB12548">
    <property type="generic name" value="Sparsentan"/>
</dbReference>
<dbReference type="DrugBank" id="DB01349">
    <property type="generic name" value="Tasosartan"/>
</dbReference>
<dbReference type="DrugBank" id="DB00966">
    <property type="generic name" value="Telmisartan"/>
</dbReference>
<dbReference type="DrugBank" id="DB12199">
    <property type="generic name" value="TRV-120027"/>
</dbReference>
<dbReference type="DrugBank" id="DB00177">
    <property type="generic name" value="Valsartan"/>
</dbReference>
<dbReference type="DrugCentral" id="P30556"/>
<dbReference type="GuidetoPHARMACOLOGY" id="34"/>
<dbReference type="TCDB" id="9.A.14.13.1">
    <property type="family name" value="the g-protein-coupled receptor (gpcr) family"/>
</dbReference>
<dbReference type="GlyCosmos" id="P30556">
    <property type="glycosylation" value="3 sites, No reported glycans"/>
</dbReference>
<dbReference type="GlyGen" id="P30556">
    <property type="glycosylation" value="3 sites, 3 N-linked glycans (1 site)"/>
</dbReference>
<dbReference type="iPTMnet" id="P30556"/>
<dbReference type="PhosphoSitePlus" id="P30556"/>
<dbReference type="BioMuta" id="AGTR1"/>
<dbReference type="DMDM" id="231519"/>
<dbReference type="MassIVE" id="P30556"/>
<dbReference type="PaxDb" id="9606-ENSP00000419422"/>
<dbReference type="PeptideAtlas" id="P30556"/>
<dbReference type="ProteomicsDB" id="54721"/>
<dbReference type="ABCD" id="P30556">
    <property type="antibodies" value="3 sequenced antibodies"/>
</dbReference>
<dbReference type="Antibodypedia" id="1002">
    <property type="antibodies" value="531 antibodies from 40 providers"/>
</dbReference>
<dbReference type="DNASU" id="185"/>
<dbReference type="Ensembl" id="ENST00000349243.8">
    <property type="protein sequence ID" value="ENSP00000273430.3"/>
    <property type="gene ID" value="ENSG00000144891.19"/>
</dbReference>
<dbReference type="Ensembl" id="ENST00000402260.2">
    <property type="protein sequence ID" value="ENSP00000385641.3"/>
    <property type="gene ID" value="ENSG00000144891.19"/>
</dbReference>
<dbReference type="Ensembl" id="ENST00000404754.2">
    <property type="protein sequence ID" value="ENSP00000385612.2"/>
    <property type="gene ID" value="ENSG00000144891.19"/>
</dbReference>
<dbReference type="Ensembl" id="ENST00000418473.7">
    <property type="protein sequence ID" value="ENSP00000398832.4"/>
    <property type="gene ID" value="ENSG00000144891.19"/>
</dbReference>
<dbReference type="Ensembl" id="ENST00000461609.1">
    <property type="protein sequence ID" value="ENSP00000418851.1"/>
    <property type="gene ID" value="ENSG00000144891.19"/>
</dbReference>
<dbReference type="Ensembl" id="ENST00000474935.5">
    <property type="protein sequence ID" value="ENSP00000418084.1"/>
    <property type="gene ID" value="ENSG00000144891.19"/>
</dbReference>
<dbReference type="Ensembl" id="ENST00000475347.5">
    <property type="protein sequence ID" value="ENSP00000419783.1"/>
    <property type="gene ID" value="ENSG00000144891.19"/>
</dbReference>
<dbReference type="Ensembl" id="ENST00000497524.5">
    <property type="protein sequence ID" value="ENSP00000419422.1"/>
    <property type="gene ID" value="ENSG00000144891.19"/>
</dbReference>
<dbReference type="GeneID" id="185"/>
<dbReference type="KEGG" id="hsa:185"/>
<dbReference type="MANE-Select" id="ENST00000349243.8">
    <property type="protein sequence ID" value="ENSP00000273430.3"/>
    <property type="RefSeq nucleotide sequence ID" value="NM_000685.5"/>
    <property type="RefSeq protein sequence ID" value="NP_000676.1"/>
</dbReference>
<dbReference type="AGR" id="HGNC:336"/>
<dbReference type="CTD" id="185"/>
<dbReference type="DisGeNET" id="185"/>
<dbReference type="GeneCards" id="AGTR1"/>
<dbReference type="HGNC" id="HGNC:336">
    <property type="gene designation" value="AGTR1"/>
</dbReference>
<dbReference type="HPA" id="ENSG00000144891">
    <property type="expression patterns" value="Tissue enhanced (liver, placenta)"/>
</dbReference>
<dbReference type="MalaCards" id="AGTR1"/>
<dbReference type="MIM" id="106165">
    <property type="type" value="gene"/>
</dbReference>
<dbReference type="MIM" id="267430">
    <property type="type" value="phenotype"/>
</dbReference>
<dbReference type="neXtProt" id="NX_P30556"/>
<dbReference type="OpenTargets" id="ENSG00000144891"/>
<dbReference type="Orphanet" id="97369">
    <property type="disease" value="Renal tubular dysgenesis of genetic origin"/>
</dbReference>
<dbReference type="PharmGKB" id="PA43"/>
<dbReference type="VEuPathDB" id="HostDB:ENSG00000144891"/>
<dbReference type="eggNOG" id="KOG3656">
    <property type="taxonomic scope" value="Eukaryota"/>
</dbReference>
<dbReference type="GeneTree" id="ENSGT01130000278303"/>
<dbReference type="HOGENOM" id="CLU_009579_8_3_1"/>
<dbReference type="InParanoid" id="P30556"/>
<dbReference type="OMA" id="QVFHFMQ"/>
<dbReference type="OrthoDB" id="8804420at2759"/>
<dbReference type="PAN-GO" id="P30556">
    <property type="GO annotations" value="5 GO annotations based on evolutionary models"/>
</dbReference>
<dbReference type="PhylomeDB" id="P30556"/>
<dbReference type="TreeFam" id="TF330024"/>
<dbReference type="PathwayCommons" id="P30556"/>
<dbReference type="Reactome" id="R-HSA-375276">
    <property type="pathway name" value="Peptide ligand-binding receptors"/>
</dbReference>
<dbReference type="Reactome" id="R-HSA-416476">
    <property type="pathway name" value="G alpha (q) signalling events"/>
</dbReference>
<dbReference type="Reactome" id="R-HSA-8856825">
    <property type="pathway name" value="Cargo recognition for clathrin-mediated endocytosis"/>
</dbReference>
<dbReference type="Reactome" id="R-HSA-8856828">
    <property type="pathway name" value="Clathrin-mediated endocytosis"/>
</dbReference>
<dbReference type="SignaLink" id="P30556"/>
<dbReference type="SIGNOR" id="P30556"/>
<dbReference type="BioGRID-ORCS" id="185">
    <property type="hits" value="17 hits in 1153 CRISPR screens"/>
</dbReference>
<dbReference type="ChiTaRS" id="AGTR1">
    <property type="organism name" value="human"/>
</dbReference>
<dbReference type="EvolutionaryTrace" id="P30556"/>
<dbReference type="GeneWiki" id="Angiotensin_II_receptor_type_1"/>
<dbReference type="GenomeRNAi" id="185"/>
<dbReference type="Pharos" id="P30556">
    <property type="development level" value="Tclin"/>
</dbReference>
<dbReference type="PRO" id="PR:P30556"/>
<dbReference type="Proteomes" id="UP000005640">
    <property type="component" value="Chromosome 3"/>
</dbReference>
<dbReference type="RNAct" id="P30556">
    <property type="molecule type" value="protein"/>
</dbReference>
<dbReference type="Bgee" id="ENSG00000144891">
    <property type="expression patterns" value="Expressed in skin of hip and 157 other cell types or tissues"/>
</dbReference>
<dbReference type="ExpressionAtlas" id="P30556">
    <property type="expression patterns" value="baseline and differential"/>
</dbReference>
<dbReference type="GO" id="GO:0016020">
    <property type="term" value="C:membrane"/>
    <property type="evidence" value="ECO:0000303"/>
    <property type="project" value="UniProtKB"/>
</dbReference>
<dbReference type="GO" id="GO:0005886">
    <property type="term" value="C:plasma membrane"/>
    <property type="evidence" value="ECO:0000314"/>
    <property type="project" value="UniProtKB"/>
</dbReference>
<dbReference type="GO" id="GO:0001596">
    <property type="term" value="F:angiotensin type I receptor activity"/>
    <property type="evidence" value="ECO:0000314"/>
    <property type="project" value="UniProtKB"/>
</dbReference>
<dbReference type="GO" id="GO:0004945">
    <property type="term" value="F:angiotensin type II receptor activity"/>
    <property type="evidence" value="ECO:0000314"/>
    <property type="project" value="BHF-UCL"/>
</dbReference>
<dbReference type="GO" id="GO:0031711">
    <property type="term" value="F:bradykinin receptor binding"/>
    <property type="evidence" value="ECO:0000353"/>
    <property type="project" value="BHF-UCL"/>
</dbReference>
<dbReference type="GO" id="GO:0046982">
    <property type="term" value="F:protein heterodimerization activity"/>
    <property type="evidence" value="ECO:0000353"/>
    <property type="project" value="BHF-UCL"/>
</dbReference>
<dbReference type="GO" id="GO:0038166">
    <property type="term" value="P:angiotensin-activated signaling pathway"/>
    <property type="evidence" value="ECO:0000314"/>
    <property type="project" value="BHF-UCL"/>
</dbReference>
<dbReference type="GO" id="GO:0097746">
    <property type="term" value="P:blood vessel diameter maintenance"/>
    <property type="evidence" value="ECO:0000305"/>
    <property type="project" value="BHF-UCL"/>
</dbReference>
<dbReference type="GO" id="GO:0019722">
    <property type="term" value="P:calcium-mediated signaling"/>
    <property type="evidence" value="ECO:0000314"/>
    <property type="project" value="BHF-UCL"/>
</dbReference>
<dbReference type="GO" id="GO:0060326">
    <property type="term" value="P:cell chemotaxis"/>
    <property type="evidence" value="ECO:0000314"/>
    <property type="project" value="UniProtKB"/>
</dbReference>
<dbReference type="GO" id="GO:0007186">
    <property type="term" value="P:G protein-coupled receptor signaling pathway"/>
    <property type="evidence" value="ECO:0000314"/>
    <property type="project" value="BHF-UCL"/>
</dbReference>
<dbReference type="GO" id="GO:0006954">
    <property type="term" value="P:inflammatory response"/>
    <property type="evidence" value="ECO:0000318"/>
    <property type="project" value="GO_Central"/>
</dbReference>
<dbReference type="GO" id="GO:0001822">
    <property type="term" value="P:kidney development"/>
    <property type="evidence" value="ECO:0000315"/>
    <property type="project" value="BHF-UCL"/>
</dbReference>
<dbReference type="GO" id="GO:0034374">
    <property type="term" value="P:low-density lipoprotein particle remodeling"/>
    <property type="evidence" value="ECO:0000303"/>
    <property type="project" value="BHF-UCL"/>
</dbReference>
<dbReference type="GO" id="GO:0002034">
    <property type="term" value="P:maintenance of blood vessel diameter homeostasis by renin-angiotensin"/>
    <property type="evidence" value="ECO:0000314"/>
    <property type="project" value="UniProtKB"/>
</dbReference>
<dbReference type="GO" id="GO:0086097">
    <property type="term" value="P:phospholipase C-activating angiotensin-activated signaling pathway"/>
    <property type="evidence" value="ECO:0000314"/>
    <property type="project" value="BHF-UCL"/>
</dbReference>
<dbReference type="GO" id="GO:0007200">
    <property type="term" value="P:phospholipase C-activating G protein-coupled receptor signaling pathway"/>
    <property type="evidence" value="ECO:0000314"/>
    <property type="project" value="BHF-UCL"/>
</dbReference>
<dbReference type="GO" id="GO:1903589">
    <property type="term" value="P:positive regulation of blood vessel endothelial cell proliferation involved in sprouting angiogenesis"/>
    <property type="evidence" value="ECO:0000316"/>
    <property type="project" value="BHF-UCL"/>
</dbReference>
<dbReference type="GO" id="GO:0090205">
    <property type="term" value="P:positive regulation of cholesterol metabolic process"/>
    <property type="evidence" value="ECO:0000315"/>
    <property type="project" value="BHF-UCL"/>
</dbReference>
<dbReference type="GO" id="GO:0007204">
    <property type="term" value="P:positive regulation of cytosolic calcium ion concentration"/>
    <property type="evidence" value="ECO:0000314"/>
    <property type="project" value="BHF-UCL"/>
</dbReference>
<dbReference type="GO" id="GO:0050729">
    <property type="term" value="P:positive regulation of inflammatory response"/>
    <property type="evidence" value="ECO:0000304"/>
    <property type="project" value="BHF-UCL"/>
</dbReference>
<dbReference type="GO" id="GO:0010744">
    <property type="term" value="P:positive regulation of macrophage derived foam cell differentiation"/>
    <property type="evidence" value="ECO:0000315"/>
    <property type="project" value="BHF-UCL"/>
</dbReference>
<dbReference type="GO" id="GO:2000379">
    <property type="term" value="P:positive regulation of reactive oxygen species metabolic process"/>
    <property type="evidence" value="ECO:0000304"/>
    <property type="project" value="BHF-UCL"/>
</dbReference>
<dbReference type="GO" id="GO:0001558">
    <property type="term" value="P:regulation of cell growth"/>
    <property type="evidence" value="ECO:0000303"/>
    <property type="project" value="BHF-UCL"/>
</dbReference>
<dbReference type="GO" id="GO:0042127">
    <property type="term" value="P:regulation of cell population proliferation"/>
    <property type="evidence" value="ECO:0000303"/>
    <property type="project" value="BHF-UCL"/>
</dbReference>
<dbReference type="GO" id="GO:0050727">
    <property type="term" value="P:regulation of inflammatory response"/>
    <property type="evidence" value="ECO:0000305"/>
    <property type="project" value="BHF-UCL"/>
</dbReference>
<dbReference type="GO" id="GO:0035813">
    <property type="term" value="P:regulation of renal sodium excretion"/>
    <property type="evidence" value="ECO:0000303"/>
    <property type="project" value="BHF-UCL"/>
</dbReference>
<dbReference type="GO" id="GO:0003081">
    <property type="term" value="P:regulation of systemic arterial blood pressure by renin-angiotensin"/>
    <property type="evidence" value="ECO:0000305"/>
    <property type="project" value="BHF-UCL"/>
</dbReference>
<dbReference type="GO" id="GO:0019229">
    <property type="term" value="P:regulation of vasoconstriction"/>
    <property type="evidence" value="ECO:0000314"/>
    <property type="project" value="BHF-UCL"/>
</dbReference>
<dbReference type="GO" id="GO:0002018">
    <property type="term" value="P:renin-angiotensin regulation of aldosterone production"/>
    <property type="evidence" value="ECO:0000303"/>
    <property type="project" value="BHF-UCL"/>
</dbReference>
<dbReference type="GO" id="GO:0007266">
    <property type="term" value="P:Rho protein signal transduction"/>
    <property type="evidence" value="ECO:0000314"/>
    <property type="project" value="UniProtKB"/>
</dbReference>
<dbReference type="GO" id="GO:0046718">
    <property type="term" value="P:symbiont entry into host cell"/>
    <property type="evidence" value="ECO:0000314"/>
    <property type="project" value="UniProtKB"/>
</dbReference>
<dbReference type="CDD" id="cd15192">
    <property type="entry name" value="7tmA_AT1R"/>
    <property type="match status" value="1"/>
</dbReference>
<dbReference type="FunFam" id="1.20.1070.10:FF:000088">
    <property type="entry name" value="Angiotensin II receptor type 1"/>
    <property type="match status" value="1"/>
</dbReference>
<dbReference type="Gene3D" id="1.20.1070.10">
    <property type="entry name" value="Rhodopsin 7-helix transmembrane proteins"/>
    <property type="match status" value="1"/>
</dbReference>
<dbReference type="InterPro" id="IPR000190">
    <property type="entry name" value="ATII_AT1_rcpt"/>
</dbReference>
<dbReference type="InterPro" id="IPR000248">
    <property type="entry name" value="ATII_rcpt"/>
</dbReference>
<dbReference type="InterPro" id="IPR050119">
    <property type="entry name" value="CCR1-9-like"/>
</dbReference>
<dbReference type="InterPro" id="IPR000276">
    <property type="entry name" value="GPCR_Rhodpsn"/>
</dbReference>
<dbReference type="InterPro" id="IPR017452">
    <property type="entry name" value="GPCR_Rhodpsn_7TM"/>
</dbReference>
<dbReference type="PANTHER" id="PTHR10489">
    <property type="entry name" value="CELL ADHESION MOLECULE"/>
    <property type="match status" value="1"/>
</dbReference>
<dbReference type="PANTHER" id="PTHR10489:SF956">
    <property type="entry name" value="TYPE-1 ANGIOTENSIN II RECEPTOR A"/>
    <property type="match status" value="1"/>
</dbReference>
<dbReference type="Pfam" id="PF00001">
    <property type="entry name" value="7tm_1"/>
    <property type="match status" value="1"/>
</dbReference>
<dbReference type="PRINTS" id="PR00241">
    <property type="entry name" value="ANGIOTENSINR"/>
</dbReference>
<dbReference type="PRINTS" id="PR00635">
    <property type="entry name" value="ANGIOTENSN1R"/>
</dbReference>
<dbReference type="PRINTS" id="PR00237">
    <property type="entry name" value="GPCRRHODOPSN"/>
</dbReference>
<dbReference type="SMART" id="SM01381">
    <property type="entry name" value="7TM_GPCR_Srsx"/>
    <property type="match status" value="1"/>
</dbReference>
<dbReference type="SUPFAM" id="SSF81321">
    <property type="entry name" value="Family A G protein-coupled receptor-like"/>
    <property type="match status" value="1"/>
</dbReference>
<dbReference type="PROSITE" id="PS00237">
    <property type="entry name" value="G_PROTEIN_RECEP_F1_1"/>
    <property type="match status" value="1"/>
</dbReference>
<dbReference type="PROSITE" id="PS50262">
    <property type="entry name" value="G_PROTEIN_RECEP_F1_2"/>
    <property type="match status" value="1"/>
</dbReference>
<comment type="function">
    <text evidence="7 8 12 13 15 16 19">Receptor for angiotensin II, a vasoconstricting peptide, which acts as a key regulator of blood pressure and sodium retention by the kidney (PubMed:15611106, PubMed:1567413, PubMed:25913193, PubMed:26420482, PubMed:30639100, PubMed:32079768, PubMed:8987975). The activated receptor in turn couples to G-alpha proteins G(q) (GNAQ, GNA11, GNA14 or GNA15) and thus activates phospholipase C and increases the cytosolic Ca(2+) concentrations, which in turn triggers cellular responses such as stimulation of protein kinase C (PubMed:15611106).</text>
</comment>
<comment type="function">
    <text evidence="17">(Microbial infection) During SARS coronavirus-2/SARS-CoV-2 infection, it is able to recognize and internalize the complex formed by secreted ACE2 and SARS-CoV-2 spike protein through DNM2/dynamin 2-dependent endocytosis.</text>
</comment>
<comment type="activity regulation">
    <text evidence="12 13">Strongly inhibited by anti-hypertensive drugs losartan, candesartan, valsartan, irbesartan, telmisartan, eprosartan, olmesartan and azilsartan, most of which share a common biphenyl-tetrazole scaffold.</text>
</comment>
<comment type="subunit">
    <text evidence="1 9 14 23">Interacts with MAS1 (PubMed:15809376). Interacts with ARRB1 (By similarity). Interacts with FLNA (via filamin repeat 21); increases PKA-mediated phosphorylation of FLNA (PubMed:26460884).</text>
</comment>
<comment type="interaction">
    <interactant intactId="EBI-6623016">
        <id>P30556</id>
    </interactant>
    <interactant intactId="EBI-6622938">
        <id>PRO_0000032458</id>
        <label>AGT</label>
        <dbReference type="UniProtKB" id="P01019"/>
    </interactant>
    <organismsDiffer>false</organismsDiffer>
    <experiments>2</experiments>
</comment>
<comment type="interaction">
    <interactant intactId="EBI-6623016">
        <id>P30556</id>
    </interactant>
    <interactant intactId="EBI-2875891">
        <id>P35414</id>
        <label>APLNR</label>
    </interactant>
    <organismsDiffer>false</organismsDiffer>
    <experiments>14</experiments>
</comment>
<comment type="interaction">
    <interactant intactId="EBI-6623016">
        <id>P30556</id>
    </interactant>
    <interactant intactId="EBI-714630">
        <id>P05026</id>
        <label>ATP1B1</label>
    </interactant>
    <organismsDiffer>false</organismsDiffer>
    <experiments>2</experiments>
</comment>
<comment type="interaction">
    <interactant intactId="EBI-6623016">
        <id>P30556</id>
    </interactant>
    <interactant intactId="EBI-20794243">
        <id>Q6ZMG9</id>
        <label>CERS6</label>
    </interactant>
    <organismsDiffer>false</organismsDiffer>
    <experiments>2</experiments>
</comment>
<comment type="interaction">
    <interactant intactId="EBI-6623016">
        <id>P30556</id>
    </interactant>
    <interactant intactId="EBI-1045911">
        <id>O75937</id>
        <label>DNAJC8</label>
    </interactant>
    <organismsDiffer>false</organismsDiffer>
    <experiments>2</experiments>
</comment>
<comment type="interaction">
    <interactant intactId="EBI-6623016">
        <id>P30556</id>
    </interactant>
    <interactant intactId="EBI-948441">
        <id>P54368</id>
        <label>OAZ1</label>
    </interactant>
    <organismsDiffer>false</organismsDiffer>
    <experiments>2</experiments>
</comment>
<comment type="subcellular location">
    <subcellularLocation>
        <location evidence="17">Cell membrane</location>
        <topology evidence="12 13 15 16">Multi-pass membrane protein</topology>
    </subcellularLocation>
</comment>
<comment type="tissue specificity">
    <text evidence="5">Liver, lung, adrenal and adrenocortical adenomas.</text>
</comment>
<comment type="PTM">
    <text evidence="20">C-terminal Ser or Thr residues may be phosphorylated.</text>
</comment>
<comment type="disease" evidence="10">
    <disease id="DI-02257">
        <name>Renal tubular dysgenesis</name>
        <acronym>RTD</acronym>
        <description>Autosomal recessive severe disorder of renal tubular development characterized by persistent fetal anuria and perinatal death, probably due to pulmonary hypoplasia from early-onset oligohydramnios (the Potter phenotype).</description>
        <dbReference type="MIM" id="267430"/>
    </disease>
    <text>The disease is caused by variants affecting the gene represented in this entry.</text>
</comment>
<comment type="similarity">
    <text evidence="3">Belongs to the G-protein coupled receptor 1 family.</text>
</comment>
<comment type="online information" name="Wikipedia">
    <link uri="https://en.wikipedia.org/wiki/Angiotensin_receptor"/>
    <text>Angiotensin receptor entry</text>
</comment>
<evidence type="ECO:0000250" key="1">
    <source>
        <dbReference type="UniProtKB" id="P25095"/>
    </source>
</evidence>
<evidence type="ECO:0000255" key="2"/>
<evidence type="ECO:0000255" key="3">
    <source>
        <dbReference type="PROSITE-ProRule" id="PRU00521"/>
    </source>
</evidence>
<evidence type="ECO:0000256" key="4">
    <source>
        <dbReference type="SAM" id="MobiDB-lite"/>
    </source>
</evidence>
<evidence type="ECO:0000269" key="5">
    <source>
    </source>
</evidence>
<evidence type="ECO:0000269" key="6">
    <source>
    </source>
</evidence>
<evidence type="ECO:0000269" key="7">
    <source>
    </source>
</evidence>
<evidence type="ECO:0000269" key="8">
    <source>
    </source>
</evidence>
<evidence type="ECO:0000269" key="9">
    <source>
    </source>
</evidence>
<evidence type="ECO:0000269" key="10">
    <source>
    </source>
</evidence>
<evidence type="ECO:0000269" key="11">
    <source>
    </source>
</evidence>
<evidence type="ECO:0000269" key="12">
    <source>
    </source>
</evidence>
<evidence type="ECO:0000269" key="13">
    <source>
    </source>
</evidence>
<evidence type="ECO:0000269" key="14">
    <source>
    </source>
</evidence>
<evidence type="ECO:0000269" key="15">
    <source>
    </source>
</evidence>
<evidence type="ECO:0000269" key="16">
    <source>
    </source>
</evidence>
<evidence type="ECO:0000269" key="17">
    <source>
    </source>
</evidence>
<evidence type="ECO:0000269" key="18">
    <source>
    </source>
</evidence>
<evidence type="ECO:0000269" key="19">
    <source>
    </source>
</evidence>
<evidence type="ECO:0000303" key="20">
    <source>
    </source>
</evidence>
<evidence type="ECO:0000303" key="21">
    <source>
    </source>
</evidence>
<evidence type="ECO:0000303" key="22">
    <source>
    </source>
</evidence>
<evidence type="ECO:0000305" key="23"/>
<evidence type="ECO:0000305" key="24">
    <source>
    </source>
</evidence>
<evidence type="ECO:0000305" key="25">
    <source>
    </source>
</evidence>
<evidence type="ECO:0000312" key="26">
    <source>
        <dbReference type="HGNC" id="HGNC:336"/>
    </source>
</evidence>
<evidence type="ECO:0007744" key="27">
    <source>
        <dbReference type="PDB" id="4YAY"/>
    </source>
</evidence>
<evidence type="ECO:0007744" key="28">
    <source>
        <dbReference type="PDB" id="4ZUD"/>
    </source>
</evidence>
<evidence type="ECO:0007744" key="29">
    <source>
        <dbReference type="PDB" id="6DO1"/>
    </source>
</evidence>
<evidence type="ECO:0007744" key="30">
    <source>
        <dbReference type="PDB" id="6OS0"/>
    </source>
</evidence>
<evidence type="ECO:0007744" key="31">
    <source>
        <dbReference type="PDB" id="6OS1"/>
    </source>
</evidence>
<evidence type="ECO:0007744" key="32">
    <source>
        <dbReference type="PDB" id="6OS2"/>
    </source>
</evidence>
<evidence type="ECO:0007829" key="33">
    <source>
        <dbReference type="PDB" id="4YAY"/>
    </source>
</evidence>
<evidence type="ECO:0007829" key="34">
    <source>
        <dbReference type="PDB" id="4ZUD"/>
    </source>
</evidence>
<evidence type="ECO:0007829" key="35">
    <source>
        <dbReference type="PDB" id="6OS2"/>
    </source>
</evidence>
<keyword id="KW-0002">3D-structure</keyword>
<keyword id="KW-1003">Cell membrane</keyword>
<keyword id="KW-0225">Disease variant</keyword>
<keyword id="KW-1015">Disulfide bond</keyword>
<keyword id="KW-0297">G-protein coupled receptor</keyword>
<keyword id="KW-0325">Glycoprotein</keyword>
<keyword id="KW-0945">Host-virus interaction</keyword>
<keyword id="KW-0449">Lipoprotein</keyword>
<keyword id="KW-0472">Membrane</keyword>
<keyword id="KW-0564">Palmitate</keyword>
<keyword id="KW-0597">Phosphoprotein</keyword>
<keyword id="KW-1267">Proteomics identification</keyword>
<keyword id="KW-0675">Receptor</keyword>
<keyword id="KW-1185">Reference proteome</keyword>
<keyword id="KW-0807">Transducer</keyword>
<keyword id="KW-0812">Transmembrane</keyword>
<keyword id="KW-1133">Transmembrane helix</keyword>
<gene>
    <name evidence="26" type="primary">AGTR1</name>
    <name type="synonym">AGTR1A</name>
    <name type="synonym">AGTR1B</name>
    <name type="synonym">AT2R1</name>
    <name type="synonym">AT2R1B</name>
</gene>
<sequence>MILNSSTEDGIKRIQDDCPKAGRHNYIFVMIPTLYSIIFVVGIFGNSLVVIVIYFYMKLKTVASVFLLNLALADLCFLLTLPLWAVYTAMEYRWPFGNYLCKIASASVSFNLYASVFLLTCLSIDRYLAIVHPMKSRLRRTMLVAKVTCIIIWLLAGLASLPAIIHRNVFFIENTNITVCAFHYESQNSTLPIGLGLTKNILGFLFPFLIILTSYTLIWKALKKAYEIQKNKPRNDDIFKIIMAIVLFFFFSWIPHQIFTFLDVLIQLGIIRDCRIADIVDTAMPITICIAYFNNCLNPLFYGFLGKKFKRYFLQLLKYIPPKAKSHSNLSTKMSTLSYRPSDNVSSSTKKPAPCFEVE</sequence>
<proteinExistence type="evidence at protein level"/>
<organism>
    <name type="scientific">Homo sapiens</name>
    <name type="common">Human</name>
    <dbReference type="NCBI Taxonomy" id="9606"/>
    <lineage>
        <taxon>Eukaryota</taxon>
        <taxon>Metazoa</taxon>
        <taxon>Chordata</taxon>
        <taxon>Craniata</taxon>
        <taxon>Vertebrata</taxon>
        <taxon>Euteleostomi</taxon>
        <taxon>Mammalia</taxon>
        <taxon>Eutheria</taxon>
        <taxon>Euarchontoglires</taxon>
        <taxon>Primates</taxon>
        <taxon>Haplorrhini</taxon>
        <taxon>Catarrhini</taxon>
        <taxon>Hominidae</taxon>
        <taxon>Homo</taxon>
    </lineage>
</organism>
<protein>
    <recommendedName>
        <fullName evidence="22">Type-1 angiotensin II receptor</fullName>
    </recommendedName>
    <alternativeName>
        <fullName evidence="20">AT1AR</fullName>
    </alternativeName>
    <alternativeName>
        <fullName>AT1BR</fullName>
    </alternativeName>
    <alternativeName>
        <fullName evidence="20">Angiotensin II type-1 receptor</fullName>
        <shortName evidence="21">AT1 receptor</shortName>
    </alternativeName>
</protein>
<reference key="1">
    <citation type="journal article" date="1992" name="Biochem. Biophys. Res. Commun.">
        <title>Cloning, expression, and characterization of a gene encoding the human angiotensin II type 1A receptor.</title>
        <authorList>
            <person name="Mauzy C.A."/>
            <person name="Hwang O."/>
            <person name="Egloff A.M."/>
            <person name="Wu L.H."/>
            <person name="Chung F.-Z."/>
        </authorList>
    </citation>
    <scope>NUCLEOTIDE SEQUENCE [GENOMIC DNA]</scope>
    <scope>TISSUE SPECIFICITY</scope>
</reference>
<reference key="2">
    <citation type="journal article" date="1992" name="Biochem. Biophys. Res. Commun.">
        <title>Molecular cloning and sequencing of the gene encoding human angiotensin II type 1 receptor.</title>
        <authorList>
            <person name="Furuta H."/>
            <person name="Guo D.F."/>
            <person name="Inagami T."/>
        </authorList>
    </citation>
    <scope>NUCLEOTIDE SEQUENCE [GENOMIC DNA]</scope>
    <source>
        <tissue>Lymphocyte</tissue>
    </source>
</reference>
<reference key="3">
    <citation type="journal article" date="1992" name="Biochem. Biophys. Res. Commun.">
        <title>Cloning and characterization of a human angiotensin II type 1 receptor.</title>
        <authorList>
            <person name="Bergsma D.J."/>
            <person name="Ellis C."/>
            <person name="Kumar C."/>
            <person name="Nuthalaganti P."/>
            <person name="Kersten H."/>
            <person name="Elshourbagy N.A."/>
            <person name="Griffin E."/>
            <person name="Stadel J.M."/>
            <person name="Aiyar N."/>
        </authorList>
    </citation>
    <scope>NUCLEOTIDE SEQUENCE [MRNA]</scope>
    <scope>FUNCTION</scope>
    <source>
        <tissue>Liver</tissue>
    </source>
</reference>
<reference key="4">
    <citation type="journal article" date="1992" name="Biochem. Biophys. Res. Commun.">
        <title>Molecular cloning, sequence analysis and expression of a cDNA encoding human type-1 angiotensin II receptor.</title>
        <authorList>
            <person name="Takayanagi R."/>
            <person name="Ohnaka K."/>
            <person name="Sakai Y."/>
            <person name="Nakao R."/>
            <person name="Yanase T."/>
            <person name="Haji M."/>
            <person name="Inagami T."/>
            <person name="Furuta H."/>
            <person name="Gou D.F."/>
            <person name="Nakamuta M."/>
            <person name="Nawata H."/>
        </authorList>
    </citation>
    <scope>NUCLEOTIDE SEQUENCE [MRNA]</scope>
    <source>
        <tissue>Liver</tissue>
    </source>
</reference>
<reference key="5">
    <citation type="journal article" date="1992" name="Mol. Endocrinol.">
        <title>Genetic analysis of the human type-1 angiotensin II receptor.</title>
        <authorList>
            <person name="Curnow K.M."/>
            <person name="Pascoe L."/>
            <person name="White P.C."/>
        </authorList>
    </citation>
    <scope>NUCLEOTIDE SEQUENCE [MRNA]</scope>
</reference>
<reference key="6">
    <citation type="journal article" date="1994" name="Biochem. Biophys. Res. Commun.">
        <title>Novel subtype of human angiotensin II type 1 receptor: cDNA cloning and expression.</title>
        <authorList>
            <person name="Konishi H."/>
            <person name="Kuroda S."/>
            <person name="Inada Y."/>
            <person name="Fujisawa Y."/>
        </authorList>
    </citation>
    <scope>NUCLEOTIDE SEQUENCE [MRNA]</scope>
    <scope>VARIANT TRP-289</scope>
    <source>
        <tissue>Placenta</tissue>
    </source>
</reference>
<reference key="7">
    <citation type="journal article" date="1995" name="Steroids">
        <title>Type 1 angiotensin II receptors of adrenal tumors.</title>
        <authorList>
            <person name="Nawata H."/>
            <person name="Takayanagi R."/>
            <person name="Ohnaka K."/>
            <person name="Sakai Y."/>
            <person name="Imasaki K."/>
            <person name="Yanase T."/>
            <person name="Ikuyama S."/>
            <person name="Tanaka S."/>
            <person name="Ohe K."/>
        </authorList>
    </citation>
    <scope>NUCLEOTIDE SEQUENCE [MRNA]</scope>
    <source>
        <tissue>Liver</tissue>
    </source>
</reference>
<reference key="8">
    <citation type="submission" date="1994-07" db="EMBL/GenBank/DDBJ databases">
        <title>Cloning and sequencing of a human cDNA encoding the angiotensin II receptor type 1.</title>
        <authorList>
            <person name="Ostermann E."/>
            <person name="Castanon M.J."/>
        </authorList>
    </citation>
    <scope>NUCLEOTIDE SEQUENCE [MRNA]</scope>
    <source>
        <tissue>Placenta</tissue>
    </source>
</reference>
<reference key="9">
    <citation type="submission" date="2000-03" db="EMBL/GenBank/DDBJ databases">
        <title>Rapid identification of polymorphisms in genomic DNA: a high density SNP map of the type I angiotensin II receptor gene locus on chromosome 3q.</title>
        <authorList>
            <person name="Antonellis A."/>
            <person name="Rogus J.J."/>
            <person name="Pezzolesi M.G."/>
            <person name="Makita Y."/>
            <person name="Nam M."/>
            <person name="Doria A."/>
            <person name="Warram J.H."/>
            <person name="Krolewski A.S."/>
        </authorList>
    </citation>
    <scope>NUCLEOTIDE SEQUENCE [GENOMIC DNA]</scope>
</reference>
<reference key="10">
    <citation type="submission" date="2003-01" db="EMBL/GenBank/DDBJ databases">
        <title>cDNA clones of human proteins involved in signal transduction sequenced by the Guthrie cDNA resource center (www.cdna.org).</title>
        <authorList>
            <person name="Kopatz S.A."/>
            <person name="Aronstam R.S."/>
            <person name="Sharma S.V."/>
        </authorList>
    </citation>
    <scope>NUCLEOTIDE SEQUENCE [GENOMIC DNA]</scope>
</reference>
<reference key="11">
    <citation type="journal article" date="2004" name="Genome Res.">
        <title>The status, quality, and expansion of the NIH full-length cDNA project: the Mammalian Gene Collection (MGC).</title>
        <authorList>
            <consortium name="The MGC Project Team"/>
        </authorList>
    </citation>
    <scope>NUCLEOTIDE SEQUENCE [LARGE SCALE MRNA]</scope>
    <scope>VARIANTS VAL-222 AND HIS-341</scope>
    <source>
        <tissue>Brain</tissue>
    </source>
</reference>
<reference key="12">
    <citation type="journal article" date="1996" name="Biochemistry">
        <title>The active state of the AT1 angiotensin receptor is generated by angiotensin II induction.</title>
        <authorList>
            <person name="Noda K."/>
            <person name="Feng Y.H."/>
            <person name="Liu X.P."/>
            <person name="Saad Y."/>
            <person name="Husain A."/>
            <person name="Karnik S.S."/>
        </authorList>
    </citation>
    <scope>FUNCTION</scope>
    <scope>MUTAGENESIS OF ASN-111</scope>
</reference>
<reference key="13">
    <citation type="journal article" date="2005" name="Circulation">
        <title>G-protein-coupled receptor Mas is a physiological antagonist of the angiotensin II type 1 receptor.</title>
        <authorList>
            <person name="Kostenis E."/>
            <person name="Milligan G."/>
            <person name="Christopoulos A."/>
            <person name="Sanchez-Ferrer C.F."/>
            <person name="Heringer-Walther S."/>
            <person name="Sexton P.M."/>
            <person name="Gembardt F."/>
            <person name="Kellett E."/>
            <person name="Martini L."/>
            <person name="Vanderheyden P."/>
            <person name="Schultheiss H.P."/>
            <person name="Walther T."/>
        </authorList>
    </citation>
    <scope>INTERACTION WITH MAS1</scope>
</reference>
<reference key="14">
    <citation type="journal article" date="2005" name="J. Biol. Chem.">
        <title>beta-Arrestin 1 and Galphaq/11 coordinately activate RhoA and stress fiber formation following receptor stimulation.</title>
        <authorList>
            <person name="Barnes W.G."/>
            <person name="Reiter E."/>
            <person name="Violin J.D."/>
            <person name="Ren X.-R."/>
            <person name="Milligan G."/>
            <person name="Lefkowitz R.J."/>
        </authorList>
    </citation>
    <scope>FUNCTION</scope>
</reference>
<reference key="15">
    <citation type="journal article" date="2009" name="Mol. Cell. Proteomics">
        <title>A strategy for precise and large scale identification of core fucosylated glycoproteins.</title>
        <authorList>
            <person name="Jia W."/>
            <person name="Lu Z."/>
            <person name="Fu Y."/>
            <person name="Wang H.P."/>
            <person name="Wang L.H."/>
            <person name="Chi H."/>
            <person name="Yuan Z.F."/>
            <person name="Zheng Z.B."/>
            <person name="Song L.N."/>
            <person name="Han H.H."/>
            <person name="Liang Y.M."/>
            <person name="Wang J.L."/>
            <person name="Cai Y."/>
            <person name="Zhang Y.K."/>
            <person name="Deng Y.L."/>
            <person name="Ying W.T."/>
            <person name="He S.M."/>
            <person name="Qian X.H."/>
        </authorList>
    </citation>
    <scope>GLYCOSYLATION AT ASN-4</scope>
</reference>
<reference key="16">
    <citation type="journal article" date="2015" name="Biochemistry">
        <title>G Protein-Coupled Receptors Directly Bind Filamin A with High Affinity and Promote Filamin Phosphorylation.</title>
        <authorList>
            <person name="Tirupula K.C."/>
            <person name="Ithychanda S.S."/>
            <person name="Mohan M.L."/>
            <person name="Naga Prasad S.V."/>
            <person name="Qin J."/>
            <person name="Karnik S.S."/>
        </authorList>
    </citation>
    <scope>INTERACTION WITH FLNA</scope>
</reference>
<reference key="17">
    <citation type="journal article" date="2021" name="Cell">
        <title>Soluble ACE2-mediated cell entry of SARS-CoV-2 via interaction with proteins related to the renin-angiotensin system.</title>
        <authorList>
            <person name="Yeung M.L."/>
            <person name="Teng J.L.L."/>
            <person name="Jia L."/>
            <person name="Zhang C."/>
            <person name="Huang C."/>
            <person name="Cai J.P."/>
            <person name="Zhou R."/>
            <person name="Chan K.H."/>
            <person name="Zhao H."/>
            <person name="Zhu L."/>
            <person name="Siu K.L."/>
            <person name="Fung S.Y."/>
            <person name="Yung S."/>
            <person name="Chan T.M."/>
            <person name="To K.K."/>
            <person name="Chan J.F."/>
            <person name="Cai Z."/>
            <person name="Lau S.K.P."/>
            <person name="Chen Z."/>
            <person name="Jin D.Y."/>
            <person name="Woo P.C.Y."/>
            <person name="Yuen K.Y."/>
        </authorList>
    </citation>
    <scope>FUNCTION (MICROBIAL FUNCTION)</scope>
    <scope>SUBCELLULAR LOCATION</scope>
</reference>
<reference evidence="27" key="18">
    <citation type="journal article" date="2015" name="Cell">
        <title>Structure of the Angiotensin receptor revealed by serial femtosecond crystallography.</title>
        <authorList>
            <person name="Zhang H."/>
            <person name="Unal H."/>
            <person name="Gati C."/>
            <person name="Han G.W."/>
            <person name="Liu W."/>
            <person name="Zatsepin N.A."/>
            <person name="James D."/>
            <person name="Wang D."/>
            <person name="Nelson G."/>
            <person name="Weierstall U."/>
            <person name="Sawaya M.R."/>
            <person name="Xu Q."/>
            <person name="Messerschmidt M."/>
            <person name="Williams G.J."/>
            <person name="Boutet S."/>
            <person name="Yefanov O.M."/>
            <person name="White T.A."/>
            <person name="Wang C."/>
            <person name="Ishchenko A."/>
            <person name="Tirupula K.C."/>
            <person name="Desnoyer R."/>
            <person name="Coe J."/>
            <person name="Conrad C.E."/>
            <person name="Fromme P."/>
            <person name="Stevens R.C."/>
            <person name="Katritch V."/>
            <person name="Karnik S.S."/>
            <person name="Cherezov V."/>
        </authorList>
    </citation>
    <scope>X-RAY CRYSTALLOGRAPHY (2.90 ANGSTROMS) OF 15-319</scope>
    <scope>FUNCTION</scope>
    <scope>ACTIVITY REGULATION</scope>
    <scope>SUBCELLULAR LOCATION</scope>
    <scope>TOPOLOGY</scope>
    <scope>DISULFIDE BONDS</scope>
    <scope>MUTAGENESIS OF TRP-84; TYR-92; LYS-135; ARG-167; MET-284; PRO-285 AND ILE-288</scope>
</reference>
<reference evidence="28" key="19">
    <citation type="journal article" date="2015" name="J. Biol. Chem.">
        <title>Structural Basis for Ligand Recognition and Functional Selectivity at Angiotensin Receptor.</title>
        <authorList>
            <person name="Zhang H."/>
            <person name="Unal H."/>
            <person name="Desnoyer R."/>
            <person name="Han G.W."/>
            <person name="Patel N."/>
            <person name="Katritch V."/>
            <person name="Karnik S.S."/>
            <person name="Cherezov V."/>
            <person name="Stevens R.C."/>
        </authorList>
    </citation>
    <scope>X-RAY CRYSTALLOGRAPHY (2.80 ANGSTROMS) OF 15-315</scope>
    <scope>FUNCTION</scope>
    <scope>ACTIVITY REGULATION</scope>
    <scope>SUBCELLULAR LOCATION</scope>
    <scope>TOPOLOGY</scope>
    <scope>DISULFIDE BONDS</scope>
    <scope>MUTAGENESIS OF TYR-35; TRP-84; ARG-167; PHE-182; LYS-199; ILE-288 AND TYR-292</scope>
</reference>
<reference evidence="29" key="20">
    <citation type="journal article" date="2019" name="Cell">
        <title>Distinctive Activation Mechanism for Angiotensin Receptor Revealed by a Synthetic Nanobody.</title>
        <authorList>
            <person name="Wingler L.M."/>
            <person name="McMahon C."/>
            <person name="Staus D.P."/>
            <person name="Lefkowitz R.J."/>
            <person name="Kruse A.C."/>
        </authorList>
    </citation>
    <scope>X-RAY CRYSTALLOGRAPHY (2.90 ANGSTROMS) OF 2-319 IN COMPLEX WITH ANGIOTENSIN II ANALOG</scope>
    <scope>FUNCTION</scope>
    <scope>SUBCELLULAR LOCATION</scope>
    <scope>TOPOLOGY</scope>
    <scope>DISULFIDE BONDS</scope>
    <scope>GLYCOSYLATION AT ASN-176</scope>
</reference>
<reference evidence="30 31 32" key="21">
    <citation type="journal article" date="2020" name="Science">
        <title>Angiotensin and biased analogs induce structurally distinct active conformations within a GPCR.</title>
        <authorList>
            <person name="Wingler L.M."/>
            <person name="Skiba M.A."/>
            <person name="McMahon C."/>
            <person name="Staus D.P."/>
            <person name="Kleinhenz A.L.W."/>
            <person name="Suomivuori C.M."/>
            <person name="Latorraca N.R."/>
            <person name="Dror R.O."/>
            <person name="Lefkowitz R.J."/>
            <person name="Kruse A.C."/>
        </authorList>
    </citation>
    <scope>X-RAY CRYSTALLOGRAPHY (2.70 ANGSTROMS) OF 2-319 IN COMPLEX WITH ANGIOTENSIN II</scope>
    <scope>FUNCTION</scope>
    <scope>SUBCELLULAR LOCATION</scope>
    <scope>TOPOLOGY</scope>
    <scope>DISULFIDE BONDS</scope>
    <scope>GLYCOSYLATION AT ASN-176</scope>
    <scope>MUTAGENESIS OF LEU-112 AND TYR-292</scope>
</reference>
<reference key="22">
    <citation type="journal article" date="2005" name="Nat. Genet.">
        <title>Mutations in genes in the renin-angiotensin system are associated with autosomal recessive renal tubular dysgenesis.</title>
        <authorList>
            <person name="Gribouval O."/>
            <person name="Gonzales M."/>
            <person name="Neuhaus T."/>
            <person name="Aziza J."/>
            <person name="Bieth E."/>
            <person name="Laurent N."/>
            <person name="Bouton J.M."/>
            <person name="Feuillet F."/>
            <person name="Makni S."/>
            <person name="Ben Amar H."/>
            <person name="Laube G."/>
            <person name="Delezoide A.-L."/>
            <person name="Bouvier R."/>
            <person name="Dijoud F."/>
            <person name="Ollagnon-Roman E."/>
            <person name="Roume J."/>
            <person name="Joubert M."/>
            <person name="Antignac C."/>
            <person name="Gubler M.-C."/>
        </authorList>
    </citation>
    <scope>VARIANT RTD MET-282</scope>
</reference>
<name>AGTR1_HUMAN</name>